<dbReference type="EC" id="5.4.2.11" evidence="1"/>
<dbReference type="EMBL" id="CP000046">
    <property type="protein sequence ID" value="AAW37240.1"/>
    <property type="molecule type" value="Genomic_DNA"/>
</dbReference>
<dbReference type="RefSeq" id="WP_001125208.1">
    <property type="nucleotide sequence ID" value="NZ_JBGOFO010000004.1"/>
</dbReference>
<dbReference type="SMR" id="Q5HDD9"/>
<dbReference type="KEGG" id="sac:SACOL2415"/>
<dbReference type="HOGENOM" id="CLU_033323_1_5_9"/>
<dbReference type="UniPathway" id="UPA00109">
    <property type="reaction ID" value="UER00186"/>
</dbReference>
<dbReference type="Proteomes" id="UP000000530">
    <property type="component" value="Chromosome"/>
</dbReference>
<dbReference type="GO" id="GO:0004619">
    <property type="term" value="F:phosphoglycerate mutase activity"/>
    <property type="evidence" value="ECO:0007669"/>
    <property type="project" value="UniProtKB-EC"/>
</dbReference>
<dbReference type="GO" id="GO:0006094">
    <property type="term" value="P:gluconeogenesis"/>
    <property type="evidence" value="ECO:0007669"/>
    <property type="project" value="UniProtKB-UniRule"/>
</dbReference>
<dbReference type="GO" id="GO:0006096">
    <property type="term" value="P:glycolytic process"/>
    <property type="evidence" value="ECO:0007669"/>
    <property type="project" value="UniProtKB-UniRule"/>
</dbReference>
<dbReference type="CDD" id="cd07067">
    <property type="entry name" value="HP_PGM_like"/>
    <property type="match status" value="1"/>
</dbReference>
<dbReference type="FunFam" id="3.40.50.1240:FF:000003">
    <property type="entry name" value="2,3-bisphosphoglycerate-dependent phosphoglycerate mutase"/>
    <property type="match status" value="1"/>
</dbReference>
<dbReference type="Gene3D" id="3.40.50.1240">
    <property type="entry name" value="Phosphoglycerate mutase-like"/>
    <property type="match status" value="1"/>
</dbReference>
<dbReference type="HAMAP" id="MF_01039">
    <property type="entry name" value="PGAM_GpmA"/>
    <property type="match status" value="1"/>
</dbReference>
<dbReference type="InterPro" id="IPR013078">
    <property type="entry name" value="His_Pase_superF_clade-1"/>
</dbReference>
<dbReference type="InterPro" id="IPR029033">
    <property type="entry name" value="His_PPase_superfam"/>
</dbReference>
<dbReference type="InterPro" id="IPR001345">
    <property type="entry name" value="PG/BPGM_mutase_AS"/>
</dbReference>
<dbReference type="InterPro" id="IPR005952">
    <property type="entry name" value="Phosphogly_mut1"/>
</dbReference>
<dbReference type="NCBIfam" id="TIGR01258">
    <property type="entry name" value="pgm_1"/>
    <property type="match status" value="1"/>
</dbReference>
<dbReference type="NCBIfam" id="NF010713">
    <property type="entry name" value="PRK14115.1"/>
    <property type="match status" value="1"/>
</dbReference>
<dbReference type="NCBIfam" id="NF010717">
    <property type="entry name" value="PRK14119.1"/>
    <property type="match status" value="1"/>
</dbReference>
<dbReference type="PANTHER" id="PTHR11931">
    <property type="entry name" value="PHOSPHOGLYCERATE MUTASE"/>
    <property type="match status" value="1"/>
</dbReference>
<dbReference type="Pfam" id="PF00300">
    <property type="entry name" value="His_Phos_1"/>
    <property type="match status" value="1"/>
</dbReference>
<dbReference type="PIRSF" id="PIRSF000709">
    <property type="entry name" value="6PFK_2-Ptase"/>
    <property type="match status" value="1"/>
</dbReference>
<dbReference type="SMART" id="SM00855">
    <property type="entry name" value="PGAM"/>
    <property type="match status" value="1"/>
</dbReference>
<dbReference type="SUPFAM" id="SSF53254">
    <property type="entry name" value="Phosphoglycerate mutase-like"/>
    <property type="match status" value="1"/>
</dbReference>
<dbReference type="PROSITE" id="PS00175">
    <property type="entry name" value="PG_MUTASE"/>
    <property type="match status" value="1"/>
</dbReference>
<evidence type="ECO:0000255" key="1">
    <source>
        <dbReference type="HAMAP-Rule" id="MF_01039"/>
    </source>
</evidence>
<accession>Q5HDD9</accession>
<gene>
    <name evidence="1" type="primary">gpmA</name>
    <name type="ordered locus">SACOL2415</name>
</gene>
<comment type="function">
    <text evidence="1">Catalyzes the interconversion of 2-phosphoglycerate and 3-phosphoglycerate.</text>
</comment>
<comment type="catalytic activity">
    <reaction evidence="1">
        <text>(2R)-2-phosphoglycerate = (2R)-3-phosphoglycerate</text>
        <dbReference type="Rhea" id="RHEA:15901"/>
        <dbReference type="ChEBI" id="CHEBI:58272"/>
        <dbReference type="ChEBI" id="CHEBI:58289"/>
        <dbReference type="EC" id="5.4.2.11"/>
    </reaction>
</comment>
<comment type="pathway">
    <text evidence="1">Carbohydrate degradation; glycolysis; pyruvate from D-glyceraldehyde 3-phosphate: step 3/5.</text>
</comment>
<comment type="similarity">
    <text evidence="1">Belongs to the phosphoglycerate mutase family. BPG-dependent PGAM subfamily.</text>
</comment>
<proteinExistence type="inferred from homology"/>
<keyword id="KW-0312">Gluconeogenesis</keyword>
<keyword id="KW-0324">Glycolysis</keyword>
<keyword id="KW-0413">Isomerase</keyword>
<protein>
    <recommendedName>
        <fullName evidence="1">2,3-bisphosphoglycerate-dependent phosphoglycerate mutase</fullName>
        <shortName evidence="1">BPG-dependent PGAM</shortName>
        <shortName evidence="1">PGAM</shortName>
        <shortName evidence="1">Phosphoglyceromutase</shortName>
        <shortName evidence="1">dPGM</shortName>
        <ecNumber evidence="1">5.4.2.11</ecNumber>
    </recommendedName>
</protein>
<organism>
    <name type="scientific">Staphylococcus aureus (strain COL)</name>
    <dbReference type="NCBI Taxonomy" id="93062"/>
    <lineage>
        <taxon>Bacteria</taxon>
        <taxon>Bacillati</taxon>
        <taxon>Bacillota</taxon>
        <taxon>Bacilli</taxon>
        <taxon>Bacillales</taxon>
        <taxon>Staphylococcaceae</taxon>
        <taxon>Staphylococcus</taxon>
    </lineage>
</organism>
<sequence length="228" mass="26680">MPKLILCRHGQSEWNAKNLFTGWEDVNLSEQGINEATRAGEKVRENNIAIDVAFTSLLTRALDTTHYILTESKQQWIPVYKSWRLNERHYGGLQGLNKDDARKEFGEEQVHIWRRSYDVKPPAETEEQREAYLADRRYNHLDKRMMPYSESLKDTLVRVIPFWTDHISQYLLDGQTVLVSAHGNSIRALIKYLEDVSDEDIINYEIKTGAPLVYELTDDLEVIDKYYL</sequence>
<feature type="chain" id="PRO_0000179910" description="2,3-bisphosphoglycerate-dependent phosphoglycerate mutase">
    <location>
        <begin position="1"/>
        <end position="228"/>
    </location>
</feature>
<feature type="active site" description="Tele-phosphohistidine intermediate" evidence="1">
    <location>
        <position position="9"/>
    </location>
</feature>
<feature type="active site" description="Proton donor/acceptor" evidence="1">
    <location>
        <position position="87"/>
    </location>
</feature>
<feature type="binding site" evidence="1">
    <location>
        <begin position="8"/>
        <end position="15"/>
    </location>
    <ligand>
        <name>substrate</name>
    </ligand>
</feature>
<feature type="binding site" evidence="1">
    <location>
        <begin position="21"/>
        <end position="22"/>
    </location>
    <ligand>
        <name>substrate</name>
    </ligand>
</feature>
<feature type="binding site" evidence="1">
    <location>
        <position position="60"/>
    </location>
    <ligand>
        <name>substrate</name>
    </ligand>
</feature>
<feature type="binding site" evidence="1">
    <location>
        <begin position="87"/>
        <end position="90"/>
    </location>
    <ligand>
        <name>substrate</name>
    </ligand>
</feature>
<feature type="binding site" evidence="1">
    <location>
        <position position="98"/>
    </location>
    <ligand>
        <name>substrate</name>
    </ligand>
</feature>
<feature type="binding site" evidence="1">
    <location>
        <begin position="114"/>
        <end position="115"/>
    </location>
    <ligand>
        <name>substrate</name>
    </ligand>
</feature>
<feature type="binding site" evidence="1">
    <location>
        <begin position="183"/>
        <end position="184"/>
    </location>
    <ligand>
        <name>substrate</name>
    </ligand>
</feature>
<feature type="site" description="Transition state stabilizer" evidence="1">
    <location>
        <position position="182"/>
    </location>
</feature>
<reference key="1">
    <citation type="journal article" date="2005" name="J. Bacteriol.">
        <title>Insights on evolution of virulence and resistance from the complete genome analysis of an early methicillin-resistant Staphylococcus aureus strain and a biofilm-producing methicillin-resistant Staphylococcus epidermidis strain.</title>
        <authorList>
            <person name="Gill S.R."/>
            <person name="Fouts D.E."/>
            <person name="Archer G.L."/>
            <person name="Mongodin E.F."/>
            <person name="DeBoy R.T."/>
            <person name="Ravel J."/>
            <person name="Paulsen I.T."/>
            <person name="Kolonay J.F."/>
            <person name="Brinkac L.M."/>
            <person name="Beanan M.J."/>
            <person name="Dodson R.J."/>
            <person name="Daugherty S.C."/>
            <person name="Madupu R."/>
            <person name="Angiuoli S.V."/>
            <person name="Durkin A.S."/>
            <person name="Haft D.H."/>
            <person name="Vamathevan J.J."/>
            <person name="Khouri H."/>
            <person name="Utterback T.R."/>
            <person name="Lee C."/>
            <person name="Dimitrov G."/>
            <person name="Jiang L."/>
            <person name="Qin H."/>
            <person name="Weidman J."/>
            <person name="Tran K."/>
            <person name="Kang K.H."/>
            <person name="Hance I.R."/>
            <person name="Nelson K.E."/>
            <person name="Fraser C.M."/>
        </authorList>
    </citation>
    <scope>NUCLEOTIDE SEQUENCE [LARGE SCALE GENOMIC DNA]</scope>
    <source>
        <strain>COL</strain>
    </source>
</reference>
<name>GPMA_STAAC</name>